<accession>B4T9Y6</accession>
<proteinExistence type="inferred from homology"/>
<name>RNPH_SALHS</name>
<keyword id="KW-0548">Nucleotidyltransferase</keyword>
<keyword id="KW-0694">RNA-binding</keyword>
<keyword id="KW-0698">rRNA processing</keyword>
<keyword id="KW-0808">Transferase</keyword>
<keyword id="KW-0819">tRNA processing</keyword>
<keyword id="KW-0820">tRNA-binding</keyword>
<feature type="chain" id="PRO_1000129369" description="Ribonuclease PH">
    <location>
        <begin position="1"/>
        <end position="238"/>
    </location>
</feature>
<feature type="binding site" evidence="1">
    <location>
        <position position="86"/>
    </location>
    <ligand>
        <name>phosphate</name>
        <dbReference type="ChEBI" id="CHEBI:43474"/>
        <note>substrate</note>
    </ligand>
</feature>
<feature type="binding site" evidence="1">
    <location>
        <begin position="124"/>
        <end position="126"/>
    </location>
    <ligand>
        <name>phosphate</name>
        <dbReference type="ChEBI" id="CHEBI:43474"/>
        <note>substrate</note>
    </ligand>
</feature>
<organism>
    <name type="scientific">Salmonella heidelberg (strain SL476)</name>
    <dbReference type="NCBI Taxonomy" id="454169"/>
    <lineage>
        <taxon>Bacteria</taxon>
        <taxon>Pseudomonadati</taxon>
        <taxon>Pseudomonadota</taxon>
        <taxon>Gammaproteobacteria</taxon>
        <taxon>Enterobacterales</taxon>
        <taxon>Enterobacteriaceae</taxon>
        <taxon>Salmonella</taxon>
    </lineage>
</organism>
<sequence>MRPAGRSANQVRPVTLTRNYTKHAEGSVLVEFGDTKVLCTASIEEGVPRFLKGQGQGWITAEYGMLPRATHTRNAREAAKGKQGGRTMEIQRLIARALRAAVDLKTLGEFTITLDCDVIQADGGTRTASITGACVALADALNKLVANGKLKTNPMKGMVAAVSVGIVNGEAICDLEYVEDSAAETDMNVVMTEDGRIIEVQGTAEGEPFSHEELLTLLALARGGIESIVATQKAALEN</sequence>
<dbReference type="EC" id="2.7.7.56" evidence="1"/>
<dbReference type="EMBL" id="CP001120">
    <property type="protein sequence ID" value="ACF67441.1"/>
    <property type="molecule type" value="Genomic_DNA"/>
</dbReference>
<dbReference type="RefSeq" id="WP_001247078.1">
    <property type="nucleotide sequence ID" value="NC_011083.1"/>
</dbReference>
<dbReference type="SMR" id="B4T9Y6"/>
<dbReference type="KEGG" id="seh:SeHA_C4060"/>
<dbReference type="HOGENOM" id="CLU_050858_0_0_6"/>
<dbReference type="Proteomes" id="UP000001866">
    <property type="component" value="Chromosome"/>
</dbReference>
<dbReference type="GO" id="GO:0000175">
    <property type="term" value="F:3'-5'-RNA exonuclease activity"/>
    <property type="evidence" value="ECO:0007669"/>
    <property type="project" value="UniProtKB-UniRule"/>
</dbReference>
<dbReference type="GO" id="GO:0000049">
    <property type="term" value="F:tRNA binding"/>
    <property type="evidence" value="ECO:0007669"/>
    <property type="project" value="UniProtKB-UniRule"/>
</dbReference>
<dbReference type="GO" id="GO:0009022">
    <property type="term" value="F:tRNA nucleotidyltransferase activity"/>
    <property type="evidence" value="ECO:0007669"/>
    <property type="project" value="UniProtKB-UniRule"/>
</dbReference>
<dbReference type="GO" id="GO:0016075">
    <property type="term" value="P:rRNA catabolic process"/>
    <property type="evidence" value="ECO:0007669"/>
    <property type="project" value="UniProtKB-UniRule"/>
</dbReference>
<dbReference type="GO" id="GO:0006364">
    <property type="term" value="P:rRNA processing"/>
    <property type="evidence" value="ECO:0007669"/>
    <property type="project" value="UniProtKB-KW"/>
</dbReference>
<dbReference type="GO" id="GO:0008033">
    <property type="term" value="P:tRNA processing"/>
    <property type="evidence" value="ECO:0007669"/>
    <property type="project" value="UniProtKB-UniRule"/>
</dbReference>
<dbReference type="CDD" id="cd11362">
    <property type="entry name" value="RNase_PH_bact"/>
    <property type="match status" value="1"/>
</dbReference>
<dbReference type="FunFam" id="3.30.230.70:FF:000003">
    <property type="entry name" value="Ribonuclease PH"/>
    <property type="match status" value="1"/>
</dbReference>
<dbReference type="Gene3D" id="3.30.230.70">
    <property type="entry name" value="GHMP Kinase, N-terminal domain"/>
    <property type="match status" value="1"/>
</dbReference>
<dbReference type="HAMAP" id="MF_00564">
    <property type="entry name" value="RNase_PH"/>
    <property type="match status" value="1"/>
</dbReference>
<dbReference type="InterPro" id="IPR001247">
    <property type="entry name" value="ExoRNase_PH_dom1"/>
</dbReference>
<dbReference type="InterPro" id="IPR015847">
    <property type="entry name" value="ExoRNase_PH_dom2"/>
</dbReference>
<dbReference type="InterPro" id="IPR036345">
    <property type="entry name" value="ExoRNase_PH_dom2_sf"/>
</dbReference>
<dbReference type="InterPro" id="IPR027408">
    <property type="entry name" value="PNPase/RNase_PH_dom_sf"/>
</dbReference>
<dbReference type="InterPro" id="IPR020568">
    <property type="entry name" value="Ribosomal_Su5_D2-typ_SF"/>
</dbReference>
<dbReference type="InterPro" id="IPR050080">
    <property type="entry name" value="RNase_PH"/>
</dbReference>
<dbReference type="InterPro" id="IPR002381">
    <property type="entry name" value="RNase_PH_bac-type"/>
</dbReference>
<dbReference type="InterPro" id="IPR018336">
    <property type="entry name" value="RNase_PH_CS"/>
</dbReference>
<dbReference type="NCBIfam" id="TIGR01966">
    <property type="entry name" value="RNasePH"/>
    <property type="match status" value="1"/>
</dbReference>
<dbReference type="PANTHER" id="PTHR11953">
    <property type="entry name" value="EXOSOME COMPLEX COMPONENT"/>
    <property type="match status" value="1"/>
</dbReference>
<dbReference type="PANTHER" id="PTHR11953:SF0">
    <property type="entry name" value="EXOSOME COMPLEX COMPONENT RRP41"/>
    <property type="match status" value="1"/>
</dbReference>
<dbReference type="Pfam" id="PF01138">
    <property type="entry name" value="RNase_PH"/>
    <property type="match status" value="1"/>
</dbReference>
<dbReference type="Pfam" id="PF03725">
    <property type="entry name" value="RNase_PH_C"/>
    <property type="match status" value="1"/>
</dbReference>
<dbReference type="SUPFAM" id="SSF55666">
    <property type="entry name" value="Ribonuclease PH domain 2-like"/>
    <property type="match status" value="1"/>
</dbReference>
<dbReference type="SUPFAM" id="SSF54211">
    <property type="entry name" value="Ribosomal protein S5 domain 2-like"/>
    <property type="match status" value="1"/>
</dbReference>
<dbReference type="PROSITE" id="PS01277">
    <property type="entry name" value="RIBONUCLEASE_PH"/>
    <property type="match status" value="1"/>
</dbReference>
<gene>
    <name evidence="1" type="primary">rph</name>
    <name type="ordered locus">SeHA_C4060</name>
</gene>
<reference key="1">
    <citation type="journal article" date="2011" name="J. Bacteriol.">
        <title>Comparative genomics of 28 Salmonella enterica isolates: evidence for CRISPR-mediated adaptive sublineage evolution.</title>
        <authorList>
            <person name="Fricke W.F."/>
            <person name="Mammel M.K."/>
            <person name="McDermott P.F."/>
            <person name="Tartera C."/>
            <person name="White D.G."/>
            <person name="Leclerc J.E."/>
            <person name="Ravel J."/>
            <person name="Cebula T.A."/>
        </authorList>
    </citation>
    <scope>NUCLEOTIDE SEQUENCE [LARGE SCALE GENOMIC DNA]</scope>
    <source>
        <strain>SL476</strain>
    </source>
</reference>
<protein>
    <recommendedName>
        <fullName evidence="1">Ribonuclease PH</fullName>
        <shortName evidence="1">RNase PH</shortName>
        <ecNumber evidence="1">2.7.7.56</ecNumber>
    </recommendedName>
    <alternativeName>
        <fullName evidence="1">tRNA nucleotidyltransferase</fullName>
    </alternativeName>
</protein>
<evidence type="ECO:0000255" key="1">
    <source>
        <dbReference type="HAMAP-Rule" id="MF_00564"/>
    </source>
</evidence>
<comment type="function">
    <text evidence="1">Phosphorolytic 3'-5' exoribonuclease that plays an important role in tRNA 3'-end maturation. Removes nucleotide residues following the 3'-CCA terminus of tRNAs; can also add nucleotides to the ends of RNA molecules by using nucleoside diphosphates as substrates, but this may not be physiologically important. Probably plays a role in initiation of 16S rRNA degradation (leading to ribosome degradation) during starvation.</text>
</comment>
<comment type="catalytic activity">
    <reaction evidence="1">
        <text>tRNA(n+1) + phosphate = tRNA(n) + a ribonucleoside 5'-diphosphate</text>
        <dbReference type="Rhea" id="RHEA:10628"/>
        <dbReference type="Rhea" id="RHEA-COMP:17343"/>
        <dbReference type="Rhea" id="RHEA-COMP:17344"/>
        <dbReference type="ChEBI" id="CHEBI:43474"/>
        <dbReference type="ChEBI" id="CHEBI:57930"/>
        <dbReference type="ChEBI" id="CHEBI:173114"/>
        <dbReference type="EC" id="2.7.7.56"/>
    </reaction>
</comment>
<comment type="subunit">
    <text evidence="1">Homohexameric ring arranged as a trimer of dimers.</text>
</comment>
<comment type="similarity">
    <text evidence="1">Belongs to the RNase PH family.</text>
</comment>